<organism>
    <name type="scientific">Bos taurus</name>
    <name type="common">Bovine</name>
    <dbReference type="NCBI Taxonomy" id="9913"/>
    <lineage>
        <taxon>Eukaryota</taxon>
        <taxon>Metazoa</taxon>
        <taxon>Chordata</taxon>
        <taxon>Craniata</taxon>
        <taxon>Vertebrata</taxon>
        <taxon>Euteleostomi</taxon>
        <taxon>Mammalia</taxon>
        <taxon>Eutheria</taxon>
        <taxon>Laurasiatheria</taxon>
        <taxon>Artiodactyla</taxon>
        <taxon>Ruminantia</taxon>
        <taxon>Pecora</taxon>
        <taxon>Bovidae</taxon>
        <taxon>Bovinae</taxon>
        <taxon>Bos</taxon>
    </lineage>
</organism>
<feature type="signal peptide" evidence="1">
    <location>
        <begin position="1"/>
        <end position="26"/>
    </location>
</feature>
<feature type="peptide" id="PRO_0000006967" description="Enteric beta-defensin">
    <location>
        <begin position="27"/>
        <end position="64"/>
    </location>
</feature>
<feature type="disulfide bond" evidence="1">
    <location>
        <begin position="31"/>
        <end position="60"/>
    </location>
</feature>
<feature type="disulfide bond" evidence="1">
    <location>
        <begin position="38"/>
        <end position="53"/>
    </location>
</feature>
<feature type="disulfide bond" evidence="1">
    <location>
        <begin position="43"/>
        <end position="61"/>
    </location>
</feature>
<protein>
    <recommendedName>
        <fullName>Enteric beta-defensin</fullName>
    </recommendedName>
</protein>
<reference key="1">
    <citation type="journal article" date="1998" name="Infect. Immun.">
        <title>Enteric beta-defensin: molecular cloning and characterization of a gene with inducible intestinal epithelial cell expression associated with Cryptosporidium parvum infection.</title>
        <authorList>
            <person name="Tarver A.P."/>
            <person name="Clark D.P."/>
            <person name="Diamond G."/>
            <person name="Russell J.P."/>
            <person name="Erdjument-Bromage H."/>
            <person name="Tempst P."/>
            <person name="Cohen K.S."/>
            <person name="Jones D.E."/>
            <person name="Sweeney R.W."/>
            <person name="Wines M."/>
            <person name="Hwang S."/>
            <person name="Bevins C.L."/>
        </authorList>
    </citation>
    <scope>NUCLEOTIDE SEQUENCE [MRNA]</scope>
</reference>
<reference key="2">
    <citation type="journal article" date="1995" name="Mamm. Genome">
        <title>Somatic cell mapping of beta-defensin genes to cattle syntenic group U25 and fluorescence in situ localization to chromosome 27.</title>
        <authorList>
            <person name="Gallagher D.S. Jr."/>
            <person name="Ryan A.M."/>
            <person name="Diamond G."/>
            <person name="Bevins C.L."/>
            <person name="Womack J.E."/>
        </authorList>
    </citation>
    <scope>NUCLEOTIDE SEQUENCE [GENOMIC DNA]</scope>
</reference>
<reference key="3">
    <citation type="submission" date="2006-04" db="EMBL/GenBank/DDBJ databases">
        <authorList>
            <consortium name="NIH - Mammalian Gene Collection (MGC) project"/>
        </authorList>
    </citation>
    <scope>NUCLEOTIDE SEQUENCE [LARGE SCALE MRNA]</scope>
    <source>
        <strain>Crossbred X Angus</strain>
        <tissue>Liver</tissue>
    </source>
</reference>
<name>EAP_BOVIN</name>
<accession>O02775</accession>
<accession>Q1RMP8</accession>
<evidence type="ECO:0000250" key="1"/>
<evidence type="ECO:0000305" key="2"/>
<sequence length="64" mass="7127">MRLHHLLLTLLFLVLSAGSGFTQGISNPLSCRLNRGICVPIRCPGNLRQIGTCFTPSVKCCRWR</sequence>
<proteinExistence type="evidence at transcript level"/>
<gene>
    <name type="primary">EBD</name>
</gene>
<comment type="function">
    <text evidence="2">Has antibacterial activity.</text>
</comment>
<comment type="subcellular location">
    <subcellularLocation>
        <location>Secreted</location>
    </subcellularLocation>
</comment>
<comment type="tissue specificity">
    <text>Inducibly expressed in enteric epithelial cells.</text>
</comment>
<comment type="similarity">
    <text evidence="2">Belongs to the beta-defensin family. LAP/TAP subfamily.</text>
</comment>
<dbReference type="EMBL" id="AF000362">
    <property type="protein sequence ID" value="AAC48805.1"/>
    <property type="molecule type" value="mRNA"/>
</dbReference>
<dbReference type="EMBL" id="AF016539">
    <property type="protein sequence ID" value="AAC48804.1"/>
    <property type="molecule type" value="Genomic_DNA"/>
</dbReference>
<dbReference type="EMBL" id="BC114788">
    <property type="protein sequence ID" value="AAI14789.1"/>
    <property type="molecule type" value="mRNA"/>
</dbReference>
<dbReference type="RefSeq" id="NP_783634.1">
    <property type="nucleotide sequence ID" value="NM_175703.3"/>
</dbReference>
<dbReference type="RefSeq" id="XP_059738148.1">
    <property type="nucleotide sequence ID" value="XM_059882165.1"/>
</dbReference>
<dbReference type="SMR" id="O02775"/>
<dbReference type="FunCoup" id="O02775">
    <property type="interactions" value="208"/>
</dbReference>
<dbReference type="STRING" id="9913.ENSBTAP00000009756"/>
<dbReference type="PaxDb" id="9913-ENSBTAP00000009756"/>
<dbReference type="Ensembl" id="ENSBTAT00000009756.5">
    <property type="protein sequence ID" value="ENSBTAP00000009756.4"/>
    <property type="gene ID" value="ENSBTAG00000033545.4"/>
</dbReference>
<dbReference type="GeneID" id="281743"/>
<dbReference type="KEGG" id="bta:281743"/>
<dbReference type="CTD" id="281743"/>
<dbReference type="VEuPathDB" id="HostDB:ENSBTAG00000033545"/>
<dbReference type="eggNOG" id="ENOG502SYUI">
    <property type="taxonomic scope" value="Eukaryota"/>
</dbReference>
<dbReference type="GeneTree" id="ENSGT00940000160995"/>
<dbReference type="HOGENOM" id="CLU_189296_4_1_1"/>
<dbReference type="InParanoid" id="O02775"/>
<dbReference type="OMA" id="PGTKCCR"/>
<dbReference type="OrthoDB" id="9714396at2759"/>
<dbReference type="Proteomes" id="UP000009136">
    <property type="component" value="Chromosome 27"/>
</dbReference>
<dbReference type="Bgee" id="ENSBTAG00000033545">
    <property type="expression patterns" value="Expressed in ascending colon and 84 other cell types or tissues"/>
</dbReference>
<dbReference type="GO" id="GO:0005615">
    <property type="term" value="C:extracellular space"/>
    <property type="evidence" value="ECO:0000318"/>
    <property type="project" value="GO_Central"/>
</dbReference>
<dbReference type="GO" id="GO:0031731">
    <property type="term" value="F:CCR6 chemokine receptor binding"/>
    <property type="evidence" value="ECO:0000318"/>
    <property type="project" value="GO_Central"/>
</dbReference>
<dbReference type="GO" id="GO:0042056">
    <property type="term" value="F:chemoattractant activity"/>
    <property type="evidence" value="ECO:0000318"/>
    <property type="project" value="GO_Central"/>
</dbReference>
<dbReference type="GO" id="GO:0060326">
    <property type="term" value="P:cell chemotaxis"/>
    <property type="evidence" value="ECO:0000318"/>
    <property type="project" value="GO_Central"/>
</dbReference>
<dbReference type="GO" id="GO:0042742">
    <property type="term" value="P:defense response to bacterium"/>
    <property type="evidence" value="ECO:0000318"/>
    <property type="project" value="GO_Central"/>
</dbReference>
<dbReference type="FunFam" id="3.10.360.10:FF:000001">
    <property type="entry name" value="Beta-defensin 1"/>
    <property type="match status" value="1"/>
</dbReference>
<dbReference type="Gene3D" id="3.10.360.10">
    <property type="entry name" value="Antimicrobial Peptide, Beta-defensin 2, Chain A"/>
    <property type="match status" value="1"/>
</dbReference>
<dbReference type="InterPro" id="IPR006080">
    <property type="entry name" value="Beta/alpha-defensin_C"/>
</dbReference>
<dbReference type="InterPro" id="IPR001855">
    <property type="entry name" value="Defensin_beta-like"/>
</dbReference>
<dbReference type="PANTHER" id="PTHR20515">
    <property type="entry name" value="BETA-DEFENSIN"/>
    <property type="match status" value="1"/>
</dbReference>
<dbReference type="PANTHER" id="PTHR20515:SF2">
    <property type="entry name" value="DEFENSIN BETA 4A"/>
    <property type="match status" value="1"/>
</dbReference>
<dbReference type="Pfam" id="PF00711">
    <property type="entry name" value="Defensin_beta"/>
    <property type="match status" value="1"/>
</dbReference>
<dbReference type="SMART" id="SM00048">
    <property type="entry name" value="DEFSN"/>
    <property type="match status" value="1"/>
</dbReference>
<dbReference type="SUPFAM" id="SSF57392">
    <property type="entry name" value="Defensin-like"/>
    <property type="match status" value="1"/>
</dbReference>
<keyword id="KW-0044">Antibiotic</keyword>
<keyword id="KW-0929">Antimicrobial</keyword>
<keyword id="KW-0211">Defensin</keyword>
<keyword id="KW-1015">Disulfide bond</keyword>
<keyword id="KW-1185">Reference proteome</keyword>
<keyword id="KW-0964">Secreted</keyword>
<keyword id="KW-0732">Signal</keyword>